<proteinExistence type="evidence at protein level"/>
<comment type="function">
    <text evidence="4">Adenosine deaminase that may contribute to the degradation of extracellular adenosine, a signaling molecule that controls a variety of cellular responses. Stimulates cell proliferation.</text>
</comment>
<comment type="catalytic activity">
    <reaction evidence="4">
        <text>adenosine + H2O + H(+) = inosine + NH4(+)</text>
        <dbReference type="Rhea" id="RHEA:24408"/>
        <dbReference type="ChEBI" id="CHEBI:15377"/>
        <dbReference type="ChEBI" id="CHEBI:15378"/>
        <dbReference type="ChEBI" id="CHEBI:16335"/>
        <dbReference type="ChEBI" id="CHEBI:17596"/>
        <dbReference type="ChEBI" id="CHEBI:28938"/>
        <dbReference type="EC" id="3.5.4.4"/>
    </reaction>
</comment>
<comment type="cofactor">
    <cofactor evidence="1">
        <name>Zn(2+)</name>
        <dbReference type="ChEBI" id="CHEBI:29105"/>
    </cofactor>
    <text evidence="1">Binds 1 zinc ion per subunit.</text>
</comment>
<comment type="biophysicochemical properties">
    <kinetics>
        <KM evidence="4">230 uM for adenosine</KM>
    </kinetics>
</comment>
<comment type="subcellular location">
    <subcellularLocation>
        <location evidence="1">Secreted</location>
    </subcellularLocation>
</comment>
<comment type="developmental stage">
    <text evidence="4">Expression starts at stage 20 in the somites. At stage 22 is also detected in the cement gland, and at stage 30 is expressed in the somites, pronephros, eye, cement gland, neural tube, and neural floor plate.</text>
</comment>
<comment type="miscellaneous">
    <text>Morpholino knockdown of the protein results in reduced body size, abnormalities of the body axis, and changes in expression of developmental marker genes.</text>
</comment>
<comment type="similarity">
    <text evidence="5">Belongs to the metallo-dependent hydrolases superfamily. Adenosine and AMP deaminases family. ADGF subfamily.</text>
</comment>
<feature type="signal peptide" evidence="3">
    <location>
        <begin position="1"/>
        <end position="19"/>
    </location>
</feature>
<feature type="chain" id="PRO_0000387959" description="Adenosine deaminase 2">
    <location>
        <begin position="20"/>
        <end position="510"/>
    </location>
</feature>
<feature type="active site" description="Proton donor" evidence="1">
    <location>
        <position position="353"/>
    </location>
</feature>
<feature type="active site" description="Proton acceptor" evidence="1">
    <location>
        <position position="378"/>
    </location>
</feature>
<feature type="binding site" evidence="1">
    <location>
        <position position="104"/>
    </location>
    <ligand>
        <name>Zn(2+)</name>
        <dbReference type="ChEBI" id="CHEBI:29105"/>
        <note>catalytic</note>
    </ligand>
</feature>
<feature type="binding site" evidence="1">
    <location>
        <position position="106"/>
    </location>
    <ligand>
        <name>Zn(2+)</name>
        <dbReference type="ChEBI" id="CHEBI:29105"/>
        <note>catalytic</note>
    </ligand>
</feature>
<feature type="binding site" evidence="1">
    <location>
        <position position="107"/>
    </location>
    <ligand>
        <name>substrate</name>
    </ligand>
</feature>
<feature type="binding site" evidence="1">
    <location>
        <begin position="198"/>
        <end position="205"/>
    </location>
    <ligand>
        <name>substrate</name>
    </ligand>
</feature>
<feature type="binding site" evidence="1">
    <location>
        <position position="287"/>
    </location>
    <ligand>
        <name>substrate</name>
    </ligand>
</feature>
<feature type="binding site" evidence="1">
    <location>
        <position position="320"/>
    </location>
    <ligand>
        <name>substrate</name>
    </ligand>
</feature>
<feature type="binding site" evidence="1">
    <location>
        <position position="350"/>
    </location>
    <ligand>
        <name>Zn(2+)</name>
        <dbReference type="ChEBI" id="CHEBI:29105"/>
        <note>catalytic</note>
    </ligand>
</feature>
<feature type="binding site" evidence="1">
    <location>
        <position position="435"/>
    </location>
    <ligand>
        <name>Zn(2+)</name>
        <dbReference type="ChEBI" id="CHEBI:29105"/>
        <note>catalytic</note>
    </ligand>
</feature>
<feature type="binding site" evidence="1">
    <location>
        <position position="436"/>
    </location>
    <ligand>
        <name>substrate</name>
    </ligand>
</feature>
<feature type="glycosylation site" description="N-linked (GlcNAc...) asparagine" evidence="3">
    <location>
        <position position="119"/>
    </location>
</feature>
<feature type="glycosylation site" description="N-linked (GlcNAc...) asparagine" evidence="3">
    <location>
        <position position="179"/>
    </location>
</feature>
<feature type="glycosylation site" description="N-linked (GlcNAc...) asparagine" evidence="3">
    <location>
        <position position="372"/>
    </location>
</feature>
<feature type="glycosylation site" description="N-linked (GlcNAc...) asparagine" evidence="3">
    <location>
        <position position="390"/>
    </location>
</feature>
<feature type="disulfide bond" evidence="1">
    <location>
        <begin position="129"/>
        <end position="153"/>
    </location>
</feature>
<feature type="sequence conflict" description="In Ref. 3; AAH73357." evidence="5" ref="3">
    <original>I</original>
    <variation>M</variation>
    <location>
        <position position="36"/>
    </location>
</feature>
<feature type="sequence conflict" description="In Ref. 3; AAH73357." evidence="5" ref="3">
    <original>H</original>
    <variation>R</variation>
    <location>
        <position position="95"/>
    </location>
</feature>
<keyword id="KW-1015">Disulfide bond</keyword>
<keyword id="KW-0325">Glycoprotein</keyword>
<keyword id="KW-0378">Hydrolase</keyword>
<keyword id="KW-0479">Metal-binding</keyword>
<keyword id="KW-1185">Reference proteome</keyword>
<keyword id="KW-0964">Secreted</keyword>
<keyword id="KW-0732">Signal</keyword>
<keyword id="KW-0862">Zinc</keyword>
<accession>Q2VQV9</accession>
<accession>Q1X7G3</accession>
<accession>Q6GNZ3</accession>
<reference key="1">
    <citation type="journal article" date="2005" name="J. Mol. Evol.">
        <title>Phylogenetic analysis reveals a novel protein family closely related to adenosine deaminase.</title>
        <authorList>
            <person name="Maier S.A."/>
            <person name="Galellis J.R."/>
            <person name="McDermid H.E."/>
        </authorList>
    </citation>
    <scope>NUCLEOTIDE SEQUENCE [MRNA]</scope>
</reference>
<reference key="2">
    <citation type="journal article" date="2008" name="J. Biol. Chem.">
        <title>The extracellular adenosine deaminase growth factor, ADGF/CECR1, plays a role in Xenopus embryogenesis via the adenosine/P1 receptor.</title>
        <authorList>
            <person name="Iijima R."/>
            <person name="Kunieda T."/>
            <person name="Yamaguchi S."/>
            <person name="Kamigaki H."/>
            <person name="Fujii-Taira I."/>
            <person name="Sekimizu K."/>
            <person name="Kubo T."/>
            <person name="Natori S."/>
            <person name="Homma K.J."/>
        </authorList>
    </citation>
    <scope>NUCLEOTIDE SEQUENCE [MRNA]</scope>
    <scope>FUNCTION</scope>
    <scope>CATALYTIC ACTIVITY</scope>
    <scope>BIOPHYSICOCHEMICAL PROPERTIES</scope>
    <scope>DEVELOPMENTAL STAGE</scope>
</reference>
<reference key="3">
    <citation type="submission" date="2004-06" db="EMBL/GenBank/DDBJ databases">
        <authorList>
            <consortium name="NIH - Xenopus Gene Collection (XGC) project"/>
        </authorList>
    </citation>
    <scope>NUCLEOTIDE SEQUENCE [LARGE SCALE MRNA]</scope>
    <source>
        <tissue>Spleen</tissue>
    </source>
</reference>
<dbReference type="EC" id="3.5.4.4" evidence="4"/>
<dbReference type="EMBL" id="AY902778">
    <property type="protein sequence ID" value="AAX10952.1"/>
    <property type="molecule type" value="mRNA"/>
</dbReference>
<dbReference type="EMBL" id="AY986979">
    <property type="protein sequence ID" value="AAY42597.1"/>
    <property type="molecule type" value="mRNA"/>
</dbReference>
<dbReference type="EMBL" id="BC073357">
    <property type="protein sequence ID" value="AAH73357.1"/>
    <property type="molecule type" value="mRNA"/>
</dbReference>
<dbReference type="RefSeq" id="NP_001090531.1">
    <property type="nucleotide sequence ID" value="NM_001097062.1"/>
</dbReference>
<dbReference type="SMR" id="Q2VQV9"/>
<dbReference type="GlyCosmos" id="Q2VQV9">
    <property type="glycosylation" value="4 sites, No reported glycans"/>
</dbReference>
<dbReference type="DNASU" id="779128"/>
<dbReference type="GeneID" id="779128"/>
<dbReference type="KEGG" id="xla:779128"/>
<dbReference type="CTD" id="779128"/>
<dbReference type="Xenbase" id="XB-GENE-6254244">
    <property type="gene designation" value="ada2.L"/>
</dbReference>
<dbReference type="OrthoDB" id="7202371at2759"/>
<dbReference type="SABIO-RK" id="Q2VQV9"/>
<dbReference type="Proteomes" id="UP000186698">
    <property type="component" value="Chromosome 3L"/>
</dbReference>
<dbReference type="GO" id="GO:0005615">
    <property type="term" value="C:extracellular space"/>
    <property type="evidence" value="ECO:0000250"/>
    <property type="project" value="UniProtKB"/>
</dbReference>
<dbReference type="GO" id="GO:0004000">
    <property type="term" value="F:adenosine deaminase activity"/>
    <property type="evidence" value="ECO:0000250"/>
    <property type="project" value="UniProtKB"/>
</dbReference>
<dbReference type="GO" id="GO:0031685">
    <property type="term" value="F:adenosine receptor binding"/>
    <property type="evidence" value="ECO:0000250"/>
    <property type="project" value="UniProtKB"/>
</dbReference>
<dbReference type="GO" id="GO:0043394">
    <property type="term" value="F:proteoglycan binding"/>
    <property type="evidence" value="ECO:0000250"/>
    <property type="project" value="UniProtKB"/>
</dbReference>
<dbReference type="GO" id="GO:0008270">
    <property type="term" value="F:zinc ion binding"/>
    <property type="evidence" value="ECO:0000250"/>
    <property type="project" value="UniProtKB"/>
</dbReference>
<dbReference type="GO" id="GO:0006154">
    <property type="term" value="P:adenosine catabolic process"/>
    <property type="evidence" value="ECO:0000250"/>
    <property type="project" value="UniProtKB"/>
</dbReference>
<dbReference type="GO" id="GO:0046103">
    <property type="term" value="P:inosine biosynthetic process"/>
    <property type="evidence" value="ECO:0000318"/>
    <property type="project" value="GO_Central"/>
</dbReference>
<dbReference type="CDD" id="cd01321">
    <property type="entry name" value="ADGF"/>
    <property type="match status" value="1"/>
</dbReference>
<dbReference type="FunFam" id="3.20.20.140:FF:000017">
    <property type="entry name" value="Adenosine deaminase 2"/>
    <property type="match status" value="1"/>
</dbReference>
<dbReference type="Gene3D" id="3.20.20.140">
    <property type="entry name" value="Metal-dependent hydrolases"/>
    <property type="match status" value="1"/>
</dbReference>
<dbReference type="InterPro" id="IPR001365">
    <property type="entry name" value="A_deaminase_dom"/>
</dbReference>
<dbReference type="InterPro" id="IPR013659">
    <property type="entry name" value="A_deaminase_N"/>
</dbReference>
<dbReference type="InterPro" id="IPR006331">
    <property type="entry name" value="ADGF"/>
</dbReference>
<dbReference type="InterPro" id="IPR006330">
    <property type="entry name" value="Ado/ade_deaminase"/>
</dbReference>
<dbReference type="InterPro" id="IPR032466">
    <property type="entry name" value="Metal_Hydrolase"/>
</dbReference>
<dbReference type="NCBIfam" id="TIGR01431">
    <property type="entry name" value="adm_rel"/>
    <property type="match status" value="1"/>
</dbReference>
<dbReference type="PANTHER" id="PTHR11409">
    <property type="entry name" value="ADENOSINE DEAMINASE"/>
    <property type="match status" value="1"/>
</dbReference>
<dbReference type="PANTHER" id="PTHR11409:SF39">
    <property type="entry name" value="ADENOSINE DEAMINASE 2"/>
    <property type="match status" value="1"/>
</dbReference>
<dbReference type="Pfam" id="PF00962">
    <property type="entry name" value="A_deaminase"/>
    <property type="match status" value="1"/>
</dbReference>
<dbReference type="Pfam" id="PF08451">
    <property type="entry name" value="A_deaminase_N"/>
    <property type="match status" value="1"/>
</dbReference>
<dbReference type="SUPFAM" id="SSF51556">
    <property type="entry name" value="Metallo-dependent hydrolases"/>
    <property type="match status" value="1"/>
</dbReference>
<name>ADA2_XENLA</name>
<sequence>MACVSHWLLLLSLASATLSRPLWSERNGLIEMENSIRLGGNIILTPSEATANQKLMTVKGAEFKEAESTGLFPPSMHFFKARPLIQQSHVFSILHQMPKGGALHLHDFAILSVDWLVKNASYMADCYMCLTRDGGVRFLFAKPAPVGMLPPGCSEWILLETYRKKLGDVTEFDKGLIRNLTLLTDSPEPHIPSQDEIWRRFEGAFITASGLICYAPVFKEYFYESLRELYEDNIQYLEMRAMLPPVYELDGTVHDQFWSMAIYRDMANKFVGAHPDFLGAKIIYTVHRHEDLAQVTEAVHLAMKLMEAFPEIMAGFDLVGQEDAGHSLYQLSDALNIPSKLGVKLPYFFHAGETNWQGKDVDENVLDALLLNTTRIGHGYALLKHPVARNLSLELNVPLEICPISNQVLLLVSDLRNHPAAVLMAEGHPLVVSSDDPSIFGAQGISYDFYEMFMGIGGAKADLRTLKKLAENSIKYSALSKEGKEKLTEIWQKKWDKFIKDLAMNWKKEL</sequence>
<organism>
    <name type="scientific">Xenopus laevis</name>
    <name type="common">African clawed frog</name>
    <dbReference type="NCBI Taxonomy" id="8355"/>
    <lineage>
        <taxon>Eukaryota</taxon>
        <taxon>Metazoa</taxon>
        <taxon>Chordata</taxon>
        <taxon>Craniata</taxon>
        <taxon>Vertebrata</taxon>
        <taxon>Euteleostomi</taxon>
        <taxon>Amphibia</taxon>
        <taxon>Batrachia</taxon>
        <taxon>Anura</taxon>
        <taxon>Pipoidea</taxon>
        <taxon>Pipidae</taxon>
        <taxon>Xenopodinae</taxon>
        <taxon>Xenopus</taxon>
        <taxon>Xenopus</taxon>
    </lineage>
</organism>
<protein>
    <recommendedName>
        <fullName evidence="2">Adenosine deaminase 2</fullName>
        <ecNumber evidence="4">3.5.4.4</ecNumber>
    </recommendedName>
    <alternativeName>
        <fullName>Cat eye syndrome critical region protein 1</fullName>
    </alternativeName>
</protein>
<gene>
    <name evidence="2" type="primary">ada2</name>
    <name type="synonym">cecr1</name>
</gene>
<evidence type="ECO:0000250" key="1"/>
<evidence type="ECO:0000250" key="2">
    <source>
        <dbReference type="UniProtKB" id="Q9NZK5"/>
    </source>
</evidence>
<evidence type="ECO:0000255" key="3"/>
<evidence type="ECO:0000269" key="4">
    <source>
    </source>
</evidence>
<evidence type="ECO:0000305" key="5"/>